<dbReference type="EC" id="2.1.1.63" evidence="1"/>
<dbReference type="EMBL" id="CP000682">
    <property type="protein sequence ID" value="ABP95741.1"/>
    <property type="molecule type" value="Genomic_DNA"/>
</dbReference>
<dbReference type="RefSeq" id="WP_012021528.1">
    <property type="nucleotide sequence ID" value="NC_009440.1"/>
</dbReference>
<dbReference type="SMR" id="A4YH39"/>
<dbReference type="STRING" id="399549.Msed_1586"/>
<dbReference type="GeneID" id="91756087"/>
<dbReference type="KEGG" id="mse:Msed_1586"/>
<dbReference type="eggNOG" id="arCOG02724">
    <property type="taxonomic scope" value="Archaea"/>
</dbReference>
<dbReference type="HOGENOM" id="CLU_000445_52_2_2"/>
<dbReference type="Proteomes" id="UP000000242">
    <property type="component" value="Chromosome"/>
</dbReference>
<dbReference type="GO" id="GO:0005737">
    <property type="term" value="C:cytoplasm"/>
    <property type="evidence" value="ECO:0007669"/>
    <property type="project" value="UniProtKB-SubCell"/>
</dbReference>
<dbReference type="GO" id="GO:0003908">
    <property type="term" value="F:methylated-DNA-[protein]-cysteine S-methyltransferase activity"/>
    <property type="evidence" value="ECO:0007669"/>
    <property type="project" value="UniProtKB-UniRule"/>
</dbReference>
<dbReference type="GO" id="GO:0006307">
    <property type="term" value="P:DNA alkylation repair"/>
    <property type="evidence" value="ECO:0007669"/>
    <property type="project" value="UniProtKB-UniRule"/>
</dbReference>
<dbReference type="GO" id="GO:0032259">
    <property type="term" value="P:methylation"/>
    <property type="evidence" value="ECO:0007669"/>
    <property type="project" value="UniProtKB-KW"/>
</dbReference>
<dbReference type="CDD" id="cd06445">
    <property type="entry name" value="ATase"/>
    <property type="match status" value="1"/>
</dbReference>
<dbReference type="FunFam" id="1.10.10.10:FF:000214">
    <property type="entry name" value="Methylated-DNA--protein-cysteine methyltransferase"/>
    <property type="match status" value="1"/>
</dbReference>
<dbReference type="Gene3D" id="3.30.160.70">
    <property type="entry name" value="Methylated DNA-protein cysteine methyltransferase domain"/>
    <property type="match status" value="1"/>
</dbReference>
<dbReference type="Gene3D" id="1.10.10.10">
    <property type="entry name" value="Winged helix-like DNA-binding domain superfamily/Winged helix DNA-binding domain"/>
    <property type="match status" value="1"/>
</dbReference>
<dbReference type="HAMAP" id="MF_00772">
    <property type="entry name" value="OGT"/>
    <property type="match status" value="1"/>
</dbReference>
<dbReference type="InterPro" id="IPR001497">
    <property type="entry name" value="MethylDNA_cys_MeTrfase_AS"/>
</dbReference>
<dbReference type="InterPro" id="IPR014048">
    <property type="entry name" value="MethylDNA_cys_MeTrfase_DNA-bd"/>
</dbReference>
<dbReference type="InterPro" id="IPR036217">
    <property type="entry name" value="MethylDNA_cys_MeTrfase_DNAb"/>
</dbReference>
<dbReference type="InterPro" id="IPR008332">
    <property type="entry name" value="MethylG_MeTrfase_N"/>
</dbReference>
<dbReference type="InterPro" id="IPR023546">
    <property type="entry name" value="MGMT"/>
</dbReference>
<dbReference type="InterPro" id="IPR036631">
    <property type="entry name" value="MGMT_N_sf"/>
</dbReference>
<dbReference type="InterPro" id="IPR036388">
    <property type="entry name" value="WH-like_DNA-bd_sf"/>
</dbReference>
<dbReference type="NCBIfam" id="TIGR00589">
    <property type="entry name" value="ogt"/>
    <property type="match status" value="1"/>
</dbReference>
<dbReference type="PANTHER" id="PTHR10815">
    <property type="entry name" value="METHYLATED-DNA--PROTEIN-CYSTEINE METHYLTRANSFERASE"/>
    <property type="match status" value="1"/>
</dbReference>
<dbReference type="PANTHER" id="PTHR10815:SF13">
    <property type="entry name" value="METHYLATED-DNA--PROTEIN-CYSTEINE METHYLTRANSFERASE"/>
    <property type="match status" value="1"/>
</dbReference>
<dbReference type="Pfam" id="PF01035">
    <property type="entry name" value="DNA_binding_1"/>
    <property type="match status" value="1"/>
</dbReference>
<dbReference type="Pfam" id="PF02870">
    <property type="entry name" value="Methyltransf_1N"/>
    <property type="match status" value="1"/>
</dbReference>
<dbReference type="SUPFAM" id="SSF53155">
    <property type="entry name" value="Methylated DNA-protein cysteine methyltransferase domain"/>
    <property type="match status" value="1"/>
</dbReference>
<dbReference type="SUPFAM" id="SSF46767">
    <property type="entry name" value="Methylated DNA-protein cysteine methyltransferase, C-terminal domain"/>
    <property type="match status" value="1"/>
</dbReference>
<dbReference type="PROSITE" id="PS00374">
    <property type="entry name" value="MGMT"/>
    <property type="match status" value="1"/>
</dbReference>
<sequence length="156" mass="17606">MIRYGTYMSPFGPITLVSEDEKIVMLDFCKCAEESLVDNNSFVGLFKKLDNYFQGKRTDFDDIPIRLNTNSFRMRVYKEVRKVKWGEVVTYKDIAEAVGTSPRAVGVALSKNPILLLIPCHRVVAENGLGGYSRGVELKRKLLELEGSLIKVPSIK</sequence>
<name>OGT_METS5</name>
<protein>
    <recommendedName>
        <fullName evidence="1">Methylated-DNA--protein-cysteine methyltransferase</fullName>
        <ecNumber evidence="1">2.1.1.63</ecNumber>
    </recommendedName>
    <alternativeName>
        <fullName evidence="1">6-O-methylguanine-DNA methyltransferase</fullName>
        <shortName evidence="1">MGMT</shortName>
    </alternativeName>
    <alternativeName>
        <fullName evidence="1">O-6-methylguanine-DNA-alkyltransferase</fullName>
    </alternativeName>
</protein>
<accession>A4YH39</accession>
<feature type="chain" id="PRO_1000072834" description="Methylated-DNA--protein-cysteine methyltransferase">
    <location>
        <begin position="1"/>
        <end position="156"/>
    </location>
</feature>
<feature type="active site" description="Nucleophile; methyl group acceptor" evidence="1">
    <location>
        <position position="120"/>
    </location>
</feature>
<reference key="1">
    <citation type="journal article" date="2008" name="Appl. Environ. Microbiol.">
        <title>The genome sequence of the metal-mobilizing, extremely thermoacidophilic archaeon Metallosphaera sedula provides insights into bioleaching-associated metabolism.</title>
        <authorList>
            <person name="Auernik K.S."/>
            <person name="Maezato Y."/>
            <person name="Blum P.H."/>
            <person name="Kelly R.M."/>
        </authorList>
    </citation>
    <scope>NUCLEOTIDE SEQUENCE [LARGE SCALE GENOMIC DNA]</scope>
    <source>
        <strain>ATCC 51363 / DSM 5348 / JCM 9185 / NBRC 15509 / TH2</strain>
    </source>
</reference>
<evidence type="ECO:0000255" key="1">
    <source>
        <dbReference type="HAMAP-Rule" id="MF_00772"/>
    </source>
</evidence>
<gene>
    <name evidence="1" type="primary">ogt</name>
    <name type="ordered locus">Msed_1586</name>
</gene>
<keyword id="KW-0963">Cytoplasm</keyword>
<keyword id="KW-0227">DNA damage</keyword>
<keyword id="KW-0234">DNA repair</keyword>
<keyword id="KW-0489">Methyltransferase</keyword>
<keyword id="KW-1185">Reference proteome</keyword>
<keyword id="KW-0808">Transferase</keyword>
<proteinExistence type="inferred from homology"/>
<organism>
    <name type="scientific">Metallosphaera sedula (strain ATCC 51363 / DSM 5348 / JCM 9185 / NBRC 15509 / TH2)</name>
    <dbReference type="NCBI Taxonomy" id="399549"/>
    <lineage>
        <taxon>Archaea</taxon>
        <taxon>Thermoproteota</taxon>
        <taxon>Thermoprotei</taxon>
        <taxon>Sulfolobales</taxon>
        <taxon>Sulfolobaceae</taxon>
        <taxon>Metallosphaera</taxon>
    </lineage>
</organism>
<comment type="function">
    <text evidence="1">Involved in the cellular defense against the biological effects of O6-methylguanine (O6-MeG) and O4-methylthymine (O4-MeT) in DNA. Repairs the methylated nucleobase in DNA by stoichiometrically transferring the methyl group to a cysteine residue in the enzyme. This is a suicide reaction: the enzyme is irreversibly inactivated.</text>
</comment>
<comment type="catalytic activity">
    <reaction evidence="1">
        <text>a 6-O-methyl-2'-deoxyguanosine in DNA + L-cysteinyl-[protein] = S-methyl-L-cysteinyl-[protein] + a 2'-deoxyguanosine in DNA</text>
        <dbReference type="Rhea" id="RHEA:24000"/>
        <dbReference type="Rhea" id="RHEA-COMP:10131"/>
        <dbReference type="Rhea" id="RHEA-COMP:10132"/>
        <dbReference type="Rhea" id="RHEA-COMP:11367"/>
        <dbReference type="Rhea" id="RHEA-COMP:11368"/>
        <dbReference type="ChEBI" id="CHEBI:29950"/>
        <dbReference type="ChEBI" id="CHEBI:82612"/>
        <dbReference type="ChEBI" id="CHEBI:85445"/>
        <dbReference type="ChEBI" id="CHEBI:85448"/>
        <dbReference type="EC" id="2.1.1.63"/>
    </reaction>
</comment>
<comment type="catalytic activity">
    <reaction evidence="1">
        <text>a 4-O-methyl-thymidine in DNA + L-cysteinyl-[protein] = a thymidine in DNA + S-methyl-L-cysteinyl-[protein]</text>
        <dbReference type="Rhea" id="RHEA:53428"/>
        <dbReference type="Rhea" id="RHEA-COMP:10131"/>
        <dbReference type="Rhea" id="RHEA-COMP:10132"/>
        <dbReference type="Rhea" id="RHEA-COMP:13555"/>
        <dbReference type="Rhea" id="RHEA-COMP:13556"/>
        <dbReference type="ChEBI" id="CHEBI:29950"/>
        <dbReference type="ChEBI" id="CHEBI:82612"/>
        <dbReference type="ChEBI" id="CHEBI:137386"/>
        <dbReference type="ChEBI" id="CHEBI:137387"/>
        <dbReference type="EC" id="2.1.1.63"/>
    </reaction>
</comment>
<comment type="subcellular location">
    <subcellularLocation>
        <location evidence="1">Cytoplasm</location>
    </subcellularLocation>
</comment>
<comment type="miscellaneous">
    <text>This enzyme catalyzes only one turnover and therefore is not strictly catalytic. According to one definition, an enzyme is a biocatalyst that acts repeatedly and over many reaction cycles.</text>
</comment>
<comment type="similarity">
    <text evidence="1">Belongs to the MGMT family.</text>
</comment>